<keyword id="KW-0963">Cytoplasm</keyword>
<keyword id="KW-0489">Methyltransferase</keyword>
<keyword id="KW-1185">Reference proteome</keyword>
<keyword id="KW-0949">S-adenosyl-L-methionine</keyword>
<keyword id="KW-0808">Transferase</keyword>
<keyword id="KW-0819">tRNA processing</keyword>
<organism>
    <name type="scientific">Desulforudis audaxviator (strain MP104C)</name>
    <dbReference type="NCBI Taxonomy" id="477974"/>
    <lineage>
        <taxon>Bacteria</taxon>
        <taxon>Bacillati</taxon>
        <taxon>Bacillota</taxon>
        <taxon>Clostridia</taxon>
        <taxon>Thermoanaerobacterales</taxon>
        <taxon>Candidatus Desulforudaceae</taxon>
        <taxon>Candidatus Desulforudis</taxon>
    </lineage>
</organism>
<gene>
    <name evidence="1" type="primary">trmD</name>
    <name type="ordered locus">Daud_0660</name>
</gene>
<proteinExistence type="inferred from homology"/>
<reference key="1">
    <citation type="submission" date="2007-10" db="EMBL/GenBank/DDBJ databases">
        <title>Complete sequence of chromosome of Desulforudis audaxviator MP104C.</title>
        <authorList>
            <person name="Copeland A."/>
            <person name="Lucas S."/>
            <person name="Lapidus A."/>
            <person name="Barry K."/>
            <person name="Glavina del Rio T."/>
            <person name="Dalin E."/>
            <person name="Tice H."/>
            <person name="Bruce D."/>
            <person name="Pitluck S."/>
            <person name="Lowry S.R."/>
            <person name="Larimer F."/>
            <person name="Land M.L."/>
            <person name="Hauser L."/>
            <person name="Kyrpides N."/>
            <person name="Ivanova N.N."/>
            <person name="Richardson P."/>
        </authorList>
    </citation>
    <scope>NUCLEOTIDE SEQUENCE [LARGE SCALE GENOMIC DNA]</scope>
    <source>
        <strain>MP104C</strain>
    </source>
</reference>
<protein>
    <recommendedName>
        <fullName evidence="1">tRNA (guanine-N(1)-)-methyltransferase</fullName>
        <ecNumber evidence="1">2.1.1.228</ecNumber>
    </recommendedName>
    <alternativeName>
        <fullName evidence="1">M1G-methyltransferase</fullName>
    </alternativeName>
    <alternativeName>
        <fullName evidence="1">tRNA [GM37] methyltransferase</fullName>
    </alternativeName>
</protein>
<comment type="function">
    <text evidence="1">Specifically methylates guanosine-37 in various tRNAs.</text>
</comment>
<comment type="catalytic activity">
    <reaction evidence="1">
        <text>guanosine(37) in tRNA + S-adenosyl-L-methionine = N(1)-methylguanosine(37) in tRNA + S-adenosyl-L-homocysteine + H(+)</text>
        <dbReference type="Rhea" id="RHEA:36899"/>
        <dbReference type="Rhea" id="RHEA-COMP:10145"/>
        <dbReference type="Rhea" id="RHEA-COMP:10147"/>
        <dbReference type="ChEBI" id="CHEBI:15378"/>
        <dbReference type="ChEBI" id="CHEBI:57856"/>
        <dbReference type="ChEBI" id="CHEBI:59789"/>
        <dbReference type="ChEBI" id="CHEBI:73542"/>
        <dbReference type="ChEBI" id="CHEBI:74269"/>
        <dbReference type="EC" id="2.1.1.228"/>
    </reaction>
</comment>
<comment type="subunit">
    <text evidence="1">Homodimer.</text>
</comment>
<comment type="subcellular location">
    <subcellularLocation>
        <location evidence="1">Cytoplasm</location>
    </subcellularLocation>
</comment>
<comment type="similarity">
    <text evidence="1">Belongs to the RNA methyltransferase TrmD family.</text>
</comment>
<evidence type="ECO:0000255" key="1">
    <source>
        <dbReference type="HAMAP-Rule" id="MF_00605"/>
    </source>
</evidence>
<dbReference type="EC" id="2.1.1.228" evidence="1"/>
<dbReference type="EMBL" id="CP000860">
    <property type="protein sequence ID" value="ACA59194.1"/>
    <property type="molecule type" value="Genomic_DNA"/>
</dbReference>
<dbReference type="RefSeq" id="WP_012301782.1">
    <property type="nucleotide sequence ID" value="NC_010424.1"/>
</dbReference>
<dbReference type="SMR" id="B1I2N1"/>
<dbReference type="STRING" id="477974.Daud_0660"/>
<dbReference type="KEGG" id="dau:Daud_0660"/>
<dbReference type="eggNOG" id="COG0336">
    <property type="taxonomic scope" value="Bacteria"/>
</dbReference>
<dbReference type="HOGENOM" id="CLU_047363_0_1_9"/>
<dbReference type="OrthoDB" id="9807416at2"/>
<dbReference type="Proteomes" id="UP000008544">
    <property type="component" value="Chromosome"/>
</dbReference>
<dbReference type="GO" id="GO:0005829">
    <property type="term" value="C:cytosol"/>
    <property type="evidence" value="ECO:0007669"/>
    <property type="project" value="TreeGrafter"/>
</dbReference>
<dbReference type="GO" id="GO:0052906">
    <property type="term" value="F:tRNA (guanine(37)-N1)-methyltransferase activity"/>
    <property type="evidence" value="ECO:0007669"/>
    <property type="project" value="UniProtKB-UniRule"/>
</dbReference>
<dbReference type="GO" id="GO:0002939">
    <property type="term" value="P:tRNA N1-guanine methylation"/>
    <property type="evidence" value="ECO:0007669"/>
    <property type="project" value="TreeGrafter"/>
</dbReference>
<dbReference type="CDD" id="cd18080">
    <property type="entry name" value="TrmD-like"/>
    <property type="match status" value="1"/>
</dbReference>
<dbReference type="FunFam" id="1.10.1270.20:FF:000001">
    <property type="entry name" value="tRNA (guanine-N(1)-)-methyltransferase"/>
    <property type="match status" value="1"/>
</dbReference>
<dbReference type="FunFam" id="3.40.1280.10:FF:000001">
    <property type="entry name" value="tRNA (guanine-N(1)-)-methyltransferase"/>
    <property type="match status" value="1"/>
</dbReference>
<dbReference type="Gene3D" id="3.40.1280.10">
    <property type="match status" value="1"/>
</dbReference>
<dbReference type="Gene3D" id="1.10.1270.20">
    <property type="entry name" value="tRNA(m1g37)methyltransferase, domain 2"/>
    <property type="match status" value="1"/>
</dbReference>
<dbReference type="HAMAP" id="MF_00605">
    <property type="entry name" value="TrmD"/>
    <property type="match status" value="1"/>
</dbReference>
<dbReference type="InterPro" id="IPR029028">
    <property type="entry name" value="Alpha/beta_knot_MTases"/>
</dbReference>
<dbReference type="InterPro" id="IPR023148">
    <property type="entry name" value="tRNA_m1G_MeTrfase_C_sf"/>
</dbReference>
<dbReference type="InterPro" id="IPR002649">
    <property type="entry name" value="tRNA_m1G_MeTrfase_TrmD"/>
</dbReference>
<dbReference type="InterPro" id="IPR029026">
    <property type="entry name" value="tRNA_m1G_MTases_N"/>
</dbReference>
<dbReference type="InterPro" id="IPR016009">
    <property type="entry name" value="tRNA_MeTrfase_TRMD/TRM10"/>
</dbReference>
<dbReference type="NCBIfam" id="NF000648">
    <property type="entry name" value="PRK00026.1"/>
    <property type="match status" value="1"/>
</dbReference>
<dbReference type="NCBIfam" id="TIGR00088">
    <property type="entry name" value="trmD"/>
    <property type="match status" value="1"/>
</dbReference>
<dbReference type="PANTHER" id="PTHR46417">
    <property type="entry name" value="TRNA (GUANINE-N(1)-)-METHYLTRANSFERASE"/>
    <property type="match status" value="1"/>
</dbReference>
<dbReference type="PANTHER" id="PTHR46417:SF1">
    <property type="entry name" value="TRNA (GUANINE-N(1)-)-METHYLTRANSFERASE"/>
    <property type="match status" value="1"/>
</dbReference>
<dbReference type="Pfam" id="PF01746">
    <property type="entry name" value="tRNA_m1G_MT"/>
    <property type="match status" value="1"/>
</dbReference>
<dbReference type="PIRSF" id="PIRSF000386">
    <property type="entry name" value="tRNA_mtase"/>
    <property type="match status" value="1"/>
</dbReference>
<dbReference type="SUPFAM" id="SSF75217">
    <property type="entry name" value="alpha/beta knot"/>
    <property type="match status" value="1"/>
</dbReference>
<accession>B1I2N1</accession>
<feature type="chain" id="PRO_1000130160" description="tRNA (guanine-N(1)-)-methyltransferase">
    <location>
        <begin position="1"/>
        <end position="249"/>
    </location>
</feature>
<feature type="binding site" evidence="1">
    <location>
        <position position="113"/>
    </location>
    <ligand>
        <name>S-adenosyl-L-methionine</name>
        <dbReference type="ChEBI" id="CHEBI:59789"/>
    </ligand>
</feature>
<feature type="binding site" evidence="1">
    <location>
        <begin position="132"/>
        <end position="137"/>
    </location>
    <ligand>
        <name>S-adenosyl-L-methionine</name>
        <dbReference type="ChEBI" id="CHEBI:59789"/>
    </ligand>
</feature>
<sequence length="249" mass="27505">MIISILTLFPEMFAGPFGSSIIKRARERGLVDIELFDIRDFSPNRHRTVDDTPYGGGGGMVMRPEPIRRALDHLLERGRGGGTVVLLCPQGRRFDQDSARALAAAGKLVLICGHYEGVDERVREDVDLEISVGDFVVTGGEIPAMLVVDAVCRLVPGVLGEPGGAEDDSFAGGLLEYPQYTRPRDYLGRDVPEVLLSGHHGEIERWRRQEALLRTLVRRPDLIDAARMEAGDRELLAQLARRLKELGLV</sequence>
<name>TRMD_DESAP</name>